<protein>
    <recommendedName>
        <fullName evidence="1">Photosystem II protein D1</fullName>
        <shortName evidence="1">PSII D1 protein</shortName>
        <ecNumber evidence="1">1.10.3.9</ecNumber>
    </recommendedName>
    <alternativeName>
        <fullName evidence="1">Photosystem II Q(B) protein</fullName>
    </alternativeName>
</protein>
<reference key="1">
    <citation type="journal article" date="2008" name="Theor. Appl. Genet.">
        <title>The complete nucleotide sequence of the cassava (Manihot esculenta) chloroplast genome and the evolution of atpF in Malpighiales: RNA editing and multiple losses of a group II intron.</title>
        <authorList>
            <person name="Daniell H."/>
            <person name="Wurdack K.J."/>
            <person name="Kanagaraj A."/>
            <person name="Lee S.-B."/>
            <person name="Saski C."/>
            <person name="Jansen R.K."/>
        </authorList>
    </citation>
    <scope>NUCLEOTIDE SEQUENCE [LARGE SCALE GENOMIC DNA]</scope>
    <source>
        <strain>cv. TME3</strain>
    </source>
</reference>
<proteinExistence type="inferred from homology"/>
<name>PSBA_MANES</name>
<dbReference type="EC" id="1.10.3.9" evidence="1"/>
<dbReference type="EMBL" id="EU117376">
    <property type="protein sequence ID" value="ABV66134.1"/>
    <property type="molecule type" value="Genomic_DNA"/>
</dbReference>
<dbReference type="RefSeq" id="YP_001718417.1">
    <property type="nucleotide sequence ID" value="NC_010433.1"/>
</dbReference>
<dbReference type="SMR" id="B1NWD0"/>
<dbReference type="GeneID" id="5999949"/>
<dbReference type="KEGG" id="mesc:5999949"/>
<dbReference type="OrthoDB" id="812726at2759"/>
<dbReference type="GO" id="GO:0009535">
    <property type="term" value="C:chloroplast thylakoid membrane"/>
    <property type="evidence" value="ECO:0007669"/>
    <property type="project" value="UniProtKB-SubCell"/>
</dbReference>
<dbReference type="GO" id="GO:0009523">
    <property type="term" value="C:photosystem II"/>
    <property type="evidence" value="ECO:0007669"/>
    <property type="project" value="UniProtKB-KW"/>
</dbReference>
<dbReference type="GO" id="GO:0016168">
    <property type="term" value="F:chlorophyll binding"/>
    <property type="evidence" value="ECO:0007669"/>
    <property type="project" value="UniProtKB-UniRule"/>
</dbReference>
<dbReference type="GO" id="GO:0045156">
    <property type="term" value="F:electron transporter, transferring electrons within the cyclic electron transport pathway of photosynthesis activity"/>
    <property type="evidence" value="ECO:0007669"/>
    <property type="project" value="InterPro"/>
</dbReference>
<dbReference type="GO" id="GO:0005506">
    <property type="term" value="F:iron ion binding"/>
    <property type="evidence" value="ECO:0007669"/>
    <property type="project" value="UniProtKB-UniRule"/>
</dbReference>
<dbReference type="GO" id="GO:0016682">
    <property type="term" value="F:oxidoreductase activity, acting on diphenols and related substances as donors, oxygen as acceptor"/>
    <property type="evidence" value="ECO:0007669"/>
    <property type="project" value="UniProtKB-UniRule"/>
</dbReference>
<dbReference type="GO" id="GO:0010242">
    <property type="term" value="F:oxygen evolving activity"/>
    <property type="evidence" value="ECO:0007669"/>
    <property type="project" value="UniProtKB-EC"/>
</dbReference>
<dbReference type="GO" id="GO:0009772">
    <property type="term" value="P:photosynthetic electron transport in photosystem II"/>
    <property type="evidence" value="ECO:0007669"/>
    <property type="project" value="InterPro"/>
</dbReference>
<dbReference type="GO" id="GO:0009635">
    <property type="term" value="P:response to herbicide"/>
    <property type="evidence" value="ECO:0007669"/>
    <property type="project" value="UniProtKB-KW"/>
</dbReference>
<dbReference type="CDD" id="cd09289">
    <property type="entry name" value="Photosystem-II_D1"/>
    <property type="match status" value="1"/>
</dbReference>
<dbReference type="FunFam" id="1.20.85.10:FF:000002">
    <property type="entry name" value="Photosystem II protein D1"/>
    <property type="match status" value="1"/>
</dbReference>
<dbReference type="Gene3D" id="1.20.85.10">
    <property type="entry name" value="Photosystem II protein D1-like"/>
    <property type="match status" value="1"/>
</dbReference>
<dbReference type="HAMAP" id="MF_01379">
    <property type="entry name" value="PSII_PsbA_D1"/>
    <property type="match status" value="1"/>
</dbReference>
<dbReference type="InterPro" id="IPR055266">
    <property type="entry name" value="D1/D2"/>
</dbReference>
<dbReference type="InterPro" id="IPR036854">
    <property type="entry name" value="Photo_II_D1/D2_sf"/>
</dbReference>
<dbReference type="InterPro" id="IPR000484">
    <property type="entry name" value="Photo_RC_L/M"/>
</dbReference>
<dbReference type="InterPro" id="IPR055265">
    <property type="entry name" value="Photo_RC_L/M_CS"/>
</dbReference>
<dbReference type="InterPro" id="IPR005867">
    <property type="entry name" value="PSII_D1"/>
</dbReference>
<dbReference type="NCBIfam" id="TIGR01151">
    <property type="entry name" value="psbA"/>
    <property type="match status" value="1"/>
</dbReference>
<dbReference type="PANTHER" id="PTHR33149:SF12">
    <property type="entry name" value="PHOTOSYSTEM II D2 PROTEIN"/>
    <property type="match status" value="1"/>
</dbReference>
<dbReference type="PANTHER" id="PTHR33149">
    <property type="entry name" value="PHOTOSYSTEM II PROTEIN D1"/>
    <property type="match status" value="1"/>
</dbReference>
<dbReference type="Pfam" id="PF00124">
    <property type="entry name" value="Photo_RC"/>
    <property type="match status" value="1"/>
</dbReference>
<dbReference type="PRINTS" id="PR00256">
    <property type="entry name" value="REACTNCENTRE"/>
</dbReference>
<dbReference type="SUPFAM" id="SSF81483">
    <property type="entry name" value="Bacterial photosystem II reaction centre, L and M subunits"/>
    <property type="match status" value="1"/>
</dbReference>
<dbReference type="PROSITE" id="PS00244">
    <property type="entry name" value="REACTION_CENTER"/>
    <property type="match status" value="1"/>
</dbReference>
<feature type="initiator methionine" description="Removed" evidence="1">
    <location>
        <position position="1"/>
    </location>
</feature>
<feature type="chain" id="PRO_0000340018" description="Photosystem II protein D1" evidence="1">
    <location>
        <begin position="2"/>
        <end position="344"/>
    </location>
</feature>
<feature type="propeptide" id="PRO_0000340019" evidence="1">
    <location>
        <begin position="345"/>
        <end position="353"/>
    </location>
</feature>
<feature type="transmembrane region" description="Helical" evidence="1">
    <location>
        <begin position="29"/>
        <end position="46"/>
    </location>
</feature>
<feature type="transmembrane region" description="Helical" evidence="1">
    <location>
        <begin position="118"/>
        <end position="133"/>
    </location>
</feature>
<feature type="transmembrane region" description="Helical" evidence="1">
    <location>
        <begin position="142"/>
        <end position="156"/>
    </location>
</feature>
<feature type="transmembrane region" description="Helical" evidence="1">
    <location>
        <begin position="197"/>
        <end position="218"/>
    </location>
</feature>
<feature type="transmembrane region" description="Helical" evidence="1">
    <location>
        <begin position="274"/>
        <end position="288"/>
    </location>
</feature>
<feature type="binding site" description="axial binding residue" evidence="1">
    <location>
        <position position="118"/>
    </location>
    <ligand>
        <name>chlorophyll a</name>
        <dbReference type="ChEBI" id="CHEBI:58416"/>
        <label>ChlzD1</label>
    </ligand>
    <ligandPart>
        <name>Mg</name>
        <dbReference type="ChEBI" id="CHEBI:25107"/>
    </ligandPart>
</feature>
<feature type="binding site" evidence="1">
    <location>
        <position position="126"/>
    </location>
    <ligand>
        <name>pheophytin a</name>
        <dbReference type="ChEBI" id="CHEBI:136840"/>
        <label>D1</label>
    </ligand>
</feature>
<feature type="binding site" evidence="1">
    <location>
        <position position="170"/>
    </location>
    <ligand>
        <name>[CaMn4O5] cluster</name>
        <dbReference type="ChEBI" id="CHEBI:189552"/>
    </ligand>
</feature>
<feature type="binding site" evidence="1">
    <location>
        <position position="189"/>
    </location>
    <ligand>
        <name>[CaMn4O5] cluster</name>
        <dbReference type="ChEBI" id="CHEBI:189552"/>
    </ligand>
</feature>
<feature type="binding site" description="axial binding residue" evidence="1">
    <location>
        <position position="198"/>
    </location>
    <ligand>
        <name>chlorophyll a</name>
        <dbReference type="ChEBI" id="CHEBI:58416"/>
        <label>PD1</label>
    </ligand>
    <ligandPart>
        <name>Mg</name>
        <dbReference type="ChEBI" id="CHEBI:25107"/>
    </ligandPart>
</feature>
<feature type="binding site" evidence="1">
    <location>
        <position position="215"/>
    </location>
    <ligand>
        <name>a quinone</name>
        <dbReference type="ChEBI" id="CHEBI:132124"/>
        <label>B</label>
    </ligand>
</feature>
<feature type="binding site" evidence="1">
    <location>
        <position position="215"/>
    </location>
    <ligand>
        <name>Fe cation</name>
        <dbReference type="ChEBI" id="CHEBI:24875"/>
        <note>ligand shared with heterodimeric partner</note>
    </ligand>
</feature>
<feature type="binding site" evidence="1">
    <location>
        <begin position="264"/>
        <end position="265"/>
    </location>
    <ligand>
        <name>a quinone</name>
        <dbReference type="ChEBI" id="CHEBI:132124"/>
        <label>B</label>
    </ligand>
</feature>
<feature type="binding site" evidence="1">
    <location>
        <position position="272"/>
    </location>
    <ligand>
        <name>Fe cation</name>
        <dbReference type="ChEBI" id="CHEBI:24875"/>
        <note>ligand shared with heterodimeric partner</note>
    </ligand>
</feature>
<feature type="binding site" evidence="1">
    <location>
        <position position="332"/>
    </location>
    <ligand>
        <name>[CaMn4O5] cluster</name>
        <dbReference type="ChEBI" id="CHEBI:189552"/>
    </ligand>
</feature>
<feature type="binding site" evidence="1">
    <location>
        <position position="333"/>
    </location>
    <ligand>
        <name>[CaMn4O5] cluster</name>
        <dbReference type="ChEBI" id="CHEBI:189552"/>
    </ligand>
</feature>
<feature type="binding site" evidence="1">
    <location>
        <position position="342"/>
    </location>
    <ligand>
        <name>[CaMn4O5] cluster</name>
        <dbReference type="ChEBI" id="CHEBI:189552"/>
    </ligand>
</feature>
<feature type="binding site" evidence="1">
    <location>
        <position position="344"/>
    </location>
    <ligand>
        <name>[CaMn4O5] cluster</name>
        <dbReference type="ChEBI" id="CHEBI:189552"/>
    </ligand>
</feature>
<feature type="site" description="Tyrosine radical intermediate" evidence="1">
    <location>
        <position position="161"/>
    </location>
</feature>
<feature type="site" description="Stabilizes free radical intermediate" evidence="1">
    <location>
        <position position="190"/>
    </location>
</feature>
<feature type="site" description="Cleavage; by CTPA" evidence="1">
    <location>
        <begin position="344"/>
        <end position="345"/>
    </location>
</feature>
<feature type="modified residue" description="N-acetylthreonine" evidence="1">
    <location>
        <position position="2"/>
    </location>
</feature>
<feature type="modified residue" description="Phosphothreonine" evidence="1">
    <location>
        <position position="2"/>
    </location>
</feature>
<comment type="function">
    <text evidence="1">Photosystem II (PSII) is a light-driven water:plastoquinone oxidoreductase that uses light energy to abstract electrons from H(2)O, generating O(2) and a proton gradient subsequently used for ATP formation. It consists of a core antenna complex that captures photons, and an electron transfer chain that converts photonic excitation into a charge separation. The D1/D2 (PsbA/PsbD) reaction center heterodimer binds P680, the primary electron donor of PSII as well as several subsequent electron acceptors.</text>
</comment>
<comment type="catalytic activity">
    <reaction evidence="1">
        <text>2 a plastoquinone + 4 hnu + 2 H2O = 2 a plastoquinol + O2</text>
        <dbReference type="Rhea" id="RHEA:36359"/>
        <dbReference type="Rhea" id="RHEA-COMP:9561"/>
        <dbReference type="Rhea" id="RHEA-COMP:9562"/>
        <dbReference type="ChEBI" id="CHEBI:15377"/>
        <dbReference type="ChEBI" id="CHEBI:15379"/>
        <dbReference type="ChEBI" id="CHEBI:17757"/>
        <dbReference type="ChEBI" id="CHEBI:30212"/>
        <dbReference type="ChEBI" id="CHEBI:62192"/>
        <dbReference type="EC" id="1.10.3.9"/>
    </reaction>
</comment>
<comment type="cofactor">
    <text evidence="1">The D1/D2 heterodimer binds P680, chlorophylls that are the primary electron donor of PSII, and subsequent electron acceptors. It shares a non-heme iron and each subunit binds pheophytin, quinone, additional chlorophylls, carotenoids and lipids. D1 provides most of the ligands for the Mn4-Ca-O5 cluster of the oxygen-evolving complex (OEC). There is also a Cl(-1) ion associated with D1 and D2, which is required for oxygen evolution. The PSII complex binds additional chlorophylls, carotenoids and specific lipids.</text>
</comment>
<comment type="subunit">
    <text evidence="1">PSII is composed of 1 copy each of membrane proteins PsbA, PsbB, PsbC, PsbD, PsbE, PsbF, PsbH, PsbI, PsbJ, PsbK, PsbL, PsbM, PsbT, PsbX, PsbY, PsbZ, Psb30/Ycf12, at least 3 peripheral proteins of the oxygen-evolving complex and a large number of cofactors. It forms dimeric complexes.</text>
</comment>
<comment type="subcellular location">
    <subcellularLocation>
        <location evidence="1">Plastid</location>
        <location evidence="1">Chloroplast thylakoid membrane</location>
        <topology evidence="1">Multi-pass membrane protein</topology>
    </subcellularLocation>
</comment>
<comment type="PTM">
    <text evidence="1">Tyr-161 forms a radical intermediate that is referred to as redox-active TyrZ, YZ or Y-Z.</text>
</comment>
<comment type="PTM">
    <text evidence="1">C-terminally processed by CTPA; processing is essential to allow assembly of the oxygen-evolving complex and thus photosynthetic growth.</text>
</comment>
<comment type="miscellaneous">
    <text evidence="1">2 of the reaction center chlorophylls (ChlD1 and ChlD2) are entirely coordinated by water.</text>
</comment>
<comment type="miscellaneous">
    <text evidence="1">Herbicides such as atrazine, BNT, diuron or ioxynil bind in the Q(B) binding site and block subsequent electron transfer.</text>
</comment>
<comment type="similarity">
    <text evidence="1">Belongs to the reaction center PufL/M/PsbA/D family.</text>
</comment>
<sequence length="353" mass="38937">MTAILERRESESLWGRFCNWITSTENRLYIGWFGVLMIPTLLTATSVFIIAFIAAPPVDIDGIREPVSGSLLYGNNIISGAIIPTSAAIGLHFYPIWEAASVDEWLYNGGPYELIVLHFLLGVACYMGREWELSFRLGMRPWIAVAYSAPVAAATAVFLIYPIGQGSFSDGMPLGISGTFNFMIVFQAEHNILMHPFHMLGVAGVFGGSLFSAMHGSLVTSSLIRETTENESANEGYRFGQEEETYNIVAAHGYFGRLIFQYASFNNSRSLHFFLAAWPVVGIWFTALGISTMAFNLNGFNFNQSVVDSQGRVINTWADIINRANLGMEVMHERNAHNFPLDLAAVEAPSTNG</sequence>
<evidence type="ECO:0000255" key="1">
    <source>
        <dbReference type="HAMAP-Rule" id="MF_01379"/>
    </source>
</evidence>
<geneLocation type="chloroplast"/>
<gene>
    <name evidence="1" type="primary">psbA</name>
</gene>
<keyword id="KW-0007">Acetylation</keyword>
<keyword id="KW-0106">Calcium</keyword>
<keyword id="KW-0148">Chlorophyll</keyword>
<keyword id="KW-0150">Chloroplast</keyword>
<keyword id="KW-0157">Chromophore</keyword>
<keyword id="KW-0249">Electron transport</keyword>
<keyword id="KW-0359">Herbicide resistance</keyword>
<keyword id="KW-0408">Iron</keyword>
<keyword id="KW-0460">Magnesium</keyword>
<keyword id="KW-0464">Manganese</keyword>
<keyword id="KW-0472">Membrane</keyword>
<keyword id="KW-0479">Metal-binding</keyword>
<keyword id="KW-0560">Oxidoreductase</keyword>
<keyword id="KW-0597">Phosphoprotein</keyword>
<keyword id="KW-0602">Photosynthesis</keyword>
<keyword id="KW-0604">Photosystem II</keyword>
<keyword id="KW-0934">Plastid</keyword>
<keyword id="KW-0793">Thylakoid</keyword>
<keyword id="KW-0812">Transmembrane</keyword>
<keyword id="KW-1133">Transmembrane helix</keyword>
<keyword id="KW-0813">Transport</keyword>
<accession>B1NWD0</accession>
<organism>
    <name type="scientific">Manihot esculenta</name>
    <name type="common">Cassava</name>
    <name type="synonym">Jatropha manihot</name>
    <dbReference type="NCBI Taxonomy" id="3983"/>
    <lineage>
        <taxon>Eukaryota</taxon>
        <taxon>Viridiplantae</taxon>
        <taxon>Streptophyta</taxon>
        <taxon>Embryophyta</taxon>
        <taxon>Tracheophyta</taxon>
        <taxon>Spermatophyta</taxon>
        <taxon>Magnoliopsida</taxon>
        <taxon>eudicotyledons</taxon>
        <taxon>Gunneridae</taxon>
        <taxon>Pentapetalae</taxon>
        <taxon>rosids</taxon>
        <taxon>fabids</taxon>
        <taxon>Malpighiales</taxon>
        <taxon>Euphorbiaceae</taxon>
        <taxon>Crotonoideae</taxon>
        <taxon>Manihoteae</taxon>
        <taxon>Manihot</taxon>
    </lineage>
</organism>